<gene>
    <name type="primary">yos9</name>
    <name type="ORF">AFUA_8G04530</name>
</gene>
<proteinExistence type="inferred from homology"/>
<evidence type="ECO:0000250" key="1"/>
<evidence type="ECO:0000250" key="2">
    <source>
        <dbReference type="UniProtKB" id="Q13438"/>
    </source>
</evidence>
<evidence type="ECO:0000255" key="3"/>
<evidence type="ECO:0000255" key="4">
    <source>
        <dbReference type="PROSITE-ProRule" id="PRU01262"/>
    </source>
</evidence>
<evidence type="ECO:0000255" key="5">
    <source>
        <dbReference type="PROSITE-ProRule" id="PRU10138"/>
    </source>
</evidence>
<evidence type="ECO:0000256" key="6">
    <source>
        <dbReference type="SAM" id="MobiDB-lite"/>
    </source>
</evidence>
<evidence type="ECO:0000305" key="7"/>
<keyword id="KW-1015">Disulfide bond</keyword>
<keyword id="KW-0256">Endoplasmic reticulum</keyword>
<keyword id="KW-0430">Lectin</keyword>
<keyword id="KW-0472">Membrane</keyword>
<keyword id="KW-1185">Reference proteome</keyword>
<keyword id="KW-0732">Signal</keyword>
<sequence length="520" mass="58265">MIRRIRTLTPLLVLACAGSGAWASKKAFNIQDDLLAYPQFQVFFPDEYILDARARELLQNQQESSSASADKTFSEGNDAQVYLGSRKDQSEDVNKETIEGSGFTYEEMLLEGQRYLCSIPQVDNGNRDQTNGAESTSKEDEQREIARATDRGLELLREMEGKCMYYISGWWSYSFCYKKQIKQFHALPSGPGVPNYPPIEDSTTHSFVLGRFPNSGDDEDLEGDAEHKKTTTDVAELQTKGGSRYLVQRLGGGTKCDLTGKDRKIEVQFHCHPQSTDRIGWIKELTTCSYLMVIYTPRLCNDVAFLPPQQDEAHAIECREILSEEEVSDWEANREYHLAQQLVESAITPEFPVVGDIEVGAHKWVGSEGKQIEKGRVASIGEEKIEVVAKRQNGEITRLSKEELKKYGLDPEKIETLKSRLEELAKGKDWTLEIVESNGERGLVGTVDSNDDEKEDHAAQGSISQPAQGTTADKGESNAETGEEKKKADEKIDHYEPEKSGPTTDDADDGSEEIFFKDEL</sequence>
<reference key="1">
    <citation type="journal article" date="2005" name="Nature">
        <title>Genomic sequence of the pathogenic and allergenic filamentous fungus Aspergillus fumigatus.</title>
        <authorList>
            <person name="Nierman W.C."/>
            <person name="Pain A."/>
            <person name="Anderson M.J."/>
            <person name="Wortman J.R."/>
            <person name="Kim H.S."/>
            <person name="Arroyo J."/>
            <person name="Berriman M."/>
            <person name="Abe K."/>
            <person name="Archer D.B."/>
            <person name="Bermejo C."/>
            <person name="Bennett J.W."/>
            <person name="Bowyer P."/>
            <person name="Chen D."/>
            <person name="Collins M."/>
            <person name="Coulsen R."/>
            <person name="Davies R."/>
            <person name="Dyer P.S."/>
            <person name="Farman M.L."/>
            <person name="Fedorova N."/>
            <person name="Fedorova N.D."/>
            <person name="Feldblyum T.V."/>
            <person name="Fischer R."/>
            <person name="Fosker N."/>
            <person name="Fraser A."/>
            <person name="Garcia J.L."/>
            <person name="Garcia M.J."/>
            <person name="Goble A."/>
            <person name="Goldman G.H."/>
            <person name="Gomi K."/>
            <person name="Griffith-Jones S."/>
            <person name="Gwilliam R."/>
            <person name="Haas B.J."/>
            <person name="Haas H."/>
            <person name="Harris D.E."/>
            <person name="Horiuchi H."/>
            <person name="Huang J."/>
            <person name="Humphray S."/>
            <person name="Jimenez J."/>
            <person name="Keller N."/>
            <person name="Khouri H."/>
            <person name="Kitamoto K."/>
            <person name="Kobayashi T."/>
            <person name="Konzack S."/>
            <person name="Kulkarni R."/>
            <person name="Kumagai T."/>
            <person name="Lafton A."/>
            <person name="Latge J.-P."/>
            <person name="Li W."/>
            <person name="Lord A."/>
            <person name="Lu C."/>
            <person name="Majoros W.H."/>
            <person name="May G.S."/>
            <person name="Miller B.L."/>
            <person name="Mohamoud Y."/>
            <person name="Molina M."/>
            <person name="Monod M."/>
            <person name="Mouyna I."/>
            <person name="Mulligan S."/>
            <person name="Murphy L.D."/>
            <person name="O'Neil S."/>
            <person name="Paulsen I."/>
            <person name="Penalva M.A."/>
            <person name="Pertea M."/>
            <person name="Price C."/>
            <person name="Pritchard B.L."/>
            <person name="Quail M.A."/>
            <person name="Rabbinowitsch E."/>
            <person name="Rawlins N."/>
            <person name="Rajandream M.A."/>
            <person name="Reichard U."/>
            <person name="Renauld H."/>
            <person name="Robson G.D."/>
            <person name="Rodriguez de Cordoba S."/>
            <person name="Rodriguez-Pena J.M."/>
            <person name="Ronning C.M."/>
            <person name="Rutter S."/>
            <person name="Salzberg S.L."/>
            <person name="Sanchez M."/>
            <person name="Sanchez-Ferrero J.C."/>
            <person name="Saunders D."/>
            <person name="Seeger K."/>
            <person name="Squares R."/>
            <person name="Squares S."/>
            <person name="Takeuchi M."/>
            <person name="Tekaia F."/>
            <person name="Turner G."/>
            <person name="Vazquez de Aldana C.R."/>
            <person name="Weidman J."/>
            <person name="White O."/>
            <person name="Woodward J.R."/>
            <person name="Yu J.-H."/>
            <person name="Fraser C.M."/>
            <person name="Galagan J.E."/>
            <person name="Asai K."/>
            <person name="Machida M."/>
            <person name="Hall N."/>
            <person name="Barrell B.G."/>
            <person name="Denning D.W."/>
        </authorList>
    </citation>
    <scope>NUCLEOTIDE SEQUENCE [LARGE SCALE GENOMIC DNA]</scope>
    <source>
        <strain>ATCC MYA-4609 / CBS 101355 / FGSC A1100 / Af293</strain>
    </source>
</reference>
<dbReference type="EMBL" id="AAHF01000013">
    <property type="protein sequence ID" value="EAL85222.1"/>
    <property type="molecule type" value="Genomic_DNA"/>
</dbReference>
<dbReference type="RefSeq" id="XP_747260.1">
    <property type="nucleotide sequence ID" value="XM_742167.1"/>
</dbReference>
<dbReference type="SMR" id="Q4WCG2"/>
<dbReference type="STRING" id="330879.Q4WCG2"/>
<dbReference type="EnsemblFungi" id="EAL85222">
    <property type="protein sequence ID" value="EAL85222"/>
    <property type="gene ID" value="AFUA_8G04530"/>
</dbReference>
<dbReference type="GeneID" id="3504663"/>
<dbReference type="KEGG" id="afm:AFUA_8G04530"/>
<dbReference type="VEuPathDB" id="FungiDB:Afu8g04530"/>
<dbReference type="eggNOG" id="KOG3394">
    <property type="taxonomic scope" value="Eukaryota"/>
</dbReference>
<dbReference type="HOGENOM" id="CLU_025069_0_0_1"/>
<dbReference type="InParanoid" id="Q4WCG2"/>
<dbReference type="OMA" id="AYPQFEV"/>
<dbReference type="OrthoDB" id="448954at2759"/>
<dbReference type="Proteomes" id="UP000002530">
    <property type="component" value="Chromosome 8"/>
</dbReference>
<dbReference type="GO" id="GO:0005788">
    <property type="term" value="C:endoplasmic reticulum lumen"/>
    <property type="evidence" value="ECO:0000318"/>
    <property type="project" value="GO_Central"/>
</dbReference>
<dbReference type="GO" id="GO:0005789">
    <property type="term" value="C:endoplasmic reticulum membrane"/>
    <property type="evidence" value="ECO:0007669"/>
    <property type="project" value="UniProtKB-SubCell"/>
</dbReference>
<dbReference type="GO" id="GO:0030246">
    <property type="term" value="F:carbohydrate binding"/>
    <property type="evidence" value="ECO:0007669"/>
    <property type="project" value="UniProtKB-KW"/>
</dbReference>
<dbReference type="GO" id="GO:0030968">
    <property type="term" value="P:endoplasmic reticulum unfolded protein response"/>
    <property type="evidence" value="ECO:0007669"/>
    <property type="project" value="InterPro"/>
</dbReference>
<dbReference type="GO" id="GO:0030970">
    <property type="term" value="P:retrograde protein transport, ER to cytosol"/>
    <property type="evidence" value="ECO:0000318"/>
    <property type="project" value="GO_Central"/>
</dbReference>
<dbReference type="FunFam" id="2.70.130.10:FF:000025">
    <property type="entry name" value="Protein OS-9 homolog"/>
    <property type="match status" value="1"/>
</dbReference>
<dbReference type="Gene3D" id="2.70.130.10">
    <property type="entry name" value="Mannose-6-phosphate receptor binding domain"/>
    <property type="match status" value="1"/>
</dbReference>
<dbReference type="InterPro" id="IPR009011">
    <property type="entry name" value="Man6P_isomerase_rcpt-bd_dom_sf"/>
</dbReference>
<dbReference type="InterPro" id="IPR044865">
    <property type="entry name" value="MRH_dom"/>
</dbReference>
<dbReference type="InterPro" id="IPR045149">
    <property type="entry name" value="OS-9-like"/>
</dbReference>
<dbReference type="InterPro" id="IPR012913">
    <property type="entry name" value="OS9-like_dom"/>
</dbReference>
<dbReference type="PANTHER" id="PTHR15414:SF0">
    <property type="entry name" value="ENDOPLASMIC RETICULUM LECTIN 1"/>
    <property type="match status" value="1"/>
</dbReference>
<dbReference type="PANTHER" id="PTHR15414">
    <property type="entry name" value="OS-9-RELATED"/>
    <property type="match status" value="1"/>
</dbReference>
<dbReference type="Pfam" id="PF07915">
    <property type="entry name" value="PRKCSH"/>
    <property type="match status" value="1"/>
</dbReference>
<dbReference type="SUPFAM" id="SSF50911">
    <property type="entry name" value="Mannose 6-phosphate receptor domain"/>
    <property type="match status" value="1"/>
</dbReference>
<dbReference type="PROSITE" id="PS00014">
    <property type="entry name" value="ER_TARGET"/>
    <property type="match status" value="1"/>
</dbReference>
<dbReference type="PROSITE" id="PS51914">
    <property type="entry name" value="MRH"/>
    <property type="match status" value="1"/>
</dbReference>
<accession>Q4WCG2</accession>
<protein>
    <recommendedName>
        <fullName>Protein OS-9 homolog</fullName>
    </recommendedName>
</protein>
<feature type="signal peptide" evidence="3">
    <location>
        <begin position="1"/>
        <end position="23"/>
    </location>
</feature>
<feature type="chain" id="PRO_0000043266" description="Protein OS-9 homolog">
    <location>
        <begin position="24"/>
        <end position="520"/>
    </location>
</feature>
<feature type="domain" description="MRH" evidence="4">
    <location>
        <begin position="161"/>
        <end position="302"/>
    </location>
</feature>
<feature type="region of interest" description="Disordered" evidence="6">
    <location>
        <begin position="121"/>
        <end position="144"/>
    </location>
</feature>
<feature type="region of interest" description="Disordered" evidence="6">
    <location>
        <begin position="442"/>
        <end position="520"/>
    </location>
</feature>
<feature type="short sequence motif" description="Prevents secretion from ER" evidence="5">
    <location>
        <begin position="517"/>
        <end position="520"/>
    </location>
</feature>
<feature type="compositionally biased region" description="Polar residues" evidence="6">
    <location>
        <begin position="121"/>
        <end position="135"/>
    </location>
</feature>
<feature type="compositionally biased region" description="Polar residues" evidence="6">
    <location>
        <begin position="461"/>
        <end position="471"/>
    </location>
</feature>
<feature type="compositionally biased region" description="Basic and acidic residues" evidence="6">
    <location>
        <begin position="473"/>
        <end position="499"/>
    </location>
</feature>
<feature type="binding site" evidence="2">
    <location>
        <position position="170"/>
    </location>
    <ligand>
        <name>a mannooligosaccharide derivative</name>
        <dbReference type="ChEBI" id="CHEBI:71274"/>
    </ligand>
</feature>
<feature type="binding site" evidence="2">
    <location>
        <position position="171"/>
    </location>
    <ligand>
        <name>a mannooligosaccharide derivative</name>
        <dbReference type="ChEBI" id="CHEBI:71274"/>
    </ligand>
</feature>
<feature type="binding site" evidence="2">
    <location>
        <position position="183"/>
    </location>
    <ligand>
        <name>a mannooligosaccharide derivative</name>
        <dbReference type="ChEBI" id="CHEBI:71274"/>
    </ligand>
</feature>
<feature type="binding site" evidence="2">
    <location>
        <position position="257"/>
    </location>
    <ligand>
        <name>a mannooligosaccharide derivative</name>
        <dbReference type="ChEBI" id="CHEBI:71274"/>
    </ligand>
</feature>
<feature type="binding site" evidence="2">
    <location>
        <position position="263"/>
    </location>
    <ligand>
        <name>a mannooligosaccharide derivative</name>
        <dbReference type="ChEBI" id="CHEBI:71274"/>
    </ligand>
</feature>
<feature type="binding site" evidence="2">
    <location>
        <position position="284"/>
    </location>
    <ligand>
        <name>a mannooligosaccharide derivative</name>
        <dbReference type="ChEBI" id="CHEBI:71274"/>
    </ligand>
</feature>
<feature type="binding site" evidence="2">
    <location>
        <position position="290"/>
    </location>
    <ligand>
        <name>a mannooligosaccharide derivative</name>
        <dbReference type="ChEBI" id="CHEBI:71274"/>
    </ligand>
</feature>
<feature type="disulfide bond" evidence="4">
    <location>
        <begin position="163"/>
        <end position="176"/>
    </location>
</feature>
<feature type="disulfide bond" evidence="4">
    <location>
        <begin position="256"/>
        <end position="288"/>
    </location>
</feature>
<feature type="disulfide bond" evidence="4">
    <location>
        <begin position="271"/>
        <end position="300"/>
    </location>
</feature>
<name>OS9_ASPFU</name>
<organism>
    <name type="scientific">Aspergillus fumigatus (strain ATCC MYA-4609 / CBS 101355 / FGSC A1100 / Af293)</name>
    <name type="common">Neosartorya fumigata</name>
    <dbReference type="NCBI Taxonomy" id="330879"/>
    <lineage>
        <taxon>Eukaryota</taxon>
        <taxon>Fungi</taxon>
        <taxon>Dikarya</taxon>
        <taxon>Ascomycota</taxon>
        <taxon>Pezizomycotina</taxon>
        <taxon>Eurotiomycetes</taxon>
        <taxon>Eurotiomycetidae</taxon>
        <taxon>Eurotiales</taxon>
        <taxon>Aspergillaceae</taxon>
        <taxon>Aspergillus</taxon>
        <taxon>Aspergillus subgen. Fumigati</taxon>
    </lineage>
</organism>
<comment type="function">
    <text evidence="1">Lectin involved in the quality control of the secretory pathway. As a member of the endoplasmic reticulum-associated degradation lumenal (ERAD-L) surveillance system, targets misfolded endoplasmic reticulum lumenal glycoproteins for degradation (By similarity).</text>
</comment>
<comment type="subunit">
    <text evidence="1">Interacts with missfolded ER lumenal proteins.</text>
</comment>
<comment type="subcellular location">
    <subcellularLocation>
        <location evidence="5">Endoplasmic reticulum membrane</location>
        <topology evidence="1">Peripheral membrane protein</topology>
        <orientation evidence="1">Lumenal side</orientation>
    </subcellularLocation>
</comment>
<comment type="similarity">
    <text evidence="7">Belongs to the OS-9 family.</text>
</comment>